<accession>P0CK45</accession>
<accession>P06928</accession>
<reference key="1">
    <citation type="journal article" date="1982" name="Nature">
        <title>The primary structure and genetic organization of the bovine papillomavirus type 1 genome.</title>
        <authorList>
            <person name="Chen E.Y."/>
            <person name="Howley P.M."/>
            <person name="Levinson A.D."/>
            <person name="Seeburg P.H."/>
        </authorList>
    </citation>
    <scope>NUCLEOTIDE SEQUENCE [GENOMIC DNA]</scope>
</reference>
<reference key="2">
    <citation type="journal article" date="1983" name="J. Virol.">
        <title>Comparative analysis of the human type 1a and bovine type 1 papillomavirus genomes.</title>
        <authorList>
            <person name="Danos O."/>
            <person name="Engel L.W."/>
            <person name="Chen E.Y."/>
            <person name="Yaniv M."/>
            <person name="Howley P.M."/>
        </authorList>
    </citation>
    <scope>COMPARATIVE ANALYSIS OF HUMAN TYPE 1A AND BOVINE TYPE 1 GENOMES</scope>
</reference>
<reference key="3">
    <citation type="journal article" date="1986" name="Science">
        <title>The E5 transforming gene of bovine papillomavirus encodes a small, hydrophobic polypeptide.</title>
        <authorList>
            <person name="Schlegel R."/>
            <person name="Wade-Glass M."/>
            <person name="Rabson M.S."/>
            <person name="Yang Y.C."/>
        </authorList>
    </citation>
    <scope>IDENTIFICATION OF PROTEIN</scope>
</reference>
<reference key="4">
    <citation type="journal article" date="1989" name="J. Virol.">
        <title>Mutational analysis of bovine papillomavirus type 1 E5 peptide domains involved in induction of cellular DNA synthesis.</title>
        <authorList>
            <person name="Rawls J.A."/>
            <person name="Loewenstein P.M."/>
            <person name="Green M."/>
        </authorList>
    </citation>
    <scope>MUTAGENESIS</scope>
</reference>
<reference key="5">
    <citation type="journal article" date="1990" name="EMBO J.">
        <title>The E5 oncoprotein of bovine papillomavirus binds to a 16 kd cellular protein.</title>
        <authorList>
            <person name="Goldstein D.J."/>
            <person name="Schlegel R."/>
        </authorList>
    </citation>
    <scope>INTERACTION WITH A CELLULAR PROTEIN</scope>
</reference>
<reference key="6">
    <citation type="journal article" date="1991" name="EMBO J.">
        <title>Activation of the platelet-derived growth factor receptor by the bovine papillomavirus E5 transforming protein.</title>
        <authorList>
            <person name="Petti L."/>
            <person name="Nilson L.A."/>
            <person name="Dimaio D."/>
        </authorList>
    </citation>
    <scope>ACTIVATION OF PDGF RECEPTOR</scope>
</reference>
<gene>
    <name type="primary">E5</name>
</gene>
<organismHost>
    <name type="scientific">Bos taurus</name>
    <name type="common">Bovine</name>
    <dbReference type="NCBI Taxonomy" id="9913"/>
</organismHost>
<protein>
    <recommendedName>
        <fullName>Protein E5</fullName>
    </recommendedName>
</protein>
<dbReference type="EMBL" id="X02346">
    <property type="protein sequence ID" value="CAB46513.1"/>
    <property type="molecule type" value="Genomic_DNA"/>
</dbReference>
<dbReference type="PIR" id="G31169">
    <property type="entry name" value="W5WLEB"/>
</dbReference>
<dbReference type="RefSeq" id="NP_056742.1">
    <property type="nucleotide sequence ID" value="NC_001522.1"/>
</dbReference>
<dbReference type="IntAct" id="P0CK45">
    <property type="interactions" value="2"/>
</dbReference>
<dbReference type="MINT" id="P0CK45"/>
<dbReference type="GeneID" id="1489021"/>
<dbReference type="KEGG" id="vg:1489021"/>
<dbReference type="Proteomes" id="UP000006567">
    <property type="component" value="Genome"/>
</dbReference>
<dbReference type="GO" id="GO:0033644">
    <property type="term" value="C:host cell membrane"/>
    <property type="evidence" value="ECO:0007669"/>
    <property type="project" value="UniProtKB-SubCell"/>
</dbReference>
<dbReference type="GO" id="GO:0016020">
    <property type="term" value="C:membrane"/>
    <property type="evidence" value="ECO:0007669"/>
    <property type="project" value="UniProtKB-KW"/>
</dbReference>
<dbReference type="GO" id="GO:0019087">
    <property type="term" value="P:symbiont-mediated transformation of host cell"/>
    <property type="evidence" value="ECO:0000314"/>
    <property type="project" value="CACAO"/>
</dbReference>
<dbReference type="InterPro" id="IPR012555">
    <property type="entry name" value="EPV_E5"/>
</dbReference>
<dbReference type="Pfam" id="PF08135">
    <property type="entry name" value="EPV_E5"/>
    <property type="match status" value="1"/>
</dbReference>
<dbReference type="PIRSF" id="PIRSF003401">
    <property type="entry name" value="EPV_E5"/>
    <property type="match status" value="1"/>
</dbReference>
<name>VE5_BPV1</name>
<evidence type="ECO:0000305" key="1"/>
<comment type="function">
    <text>E5 can induce cellular DNA synthesis. It seems to interact with a 16 kDa cellular protein. E5 seems to activate the PDGF receptor.</text>
</comment>
<comment type="subunit">
    <text>Dimer or monomer.</text>
</comment>
<comment type="interaction">
    <interactant intactId="EBI-7015490">
        <id>P0CK45</id>
    </interactant>
    <interactant intactId="EBI-721179">
        <id>P27449</id>
        <label>ATP6V0C</label>
    </interactant>
    <organismsDiffer>true</organismsDiffer>
    <experiments>2</experiments>
</comment>
<comment type="interaction">
    <interactant intactId="EBI-7015490">
        <id>P0CK45</id>
    </interactant>
    <interactant intactId="EBI-641237">
        <id>P09619</id>
        <label>PDGFRB</label>
    </interactant>
    <organismsDiffer>true</organismsDiffer>
    <experiments>2</experiments>
</comment>
<comment type="subcellular location">
    <subcellularLocation>
        <location>Host membrane</location>
        <topology>Peripheral membrane protein</topology>
    </subcellularLocation>
</comment>
<comment type="similarity">
    <text evidence="1">Belongs to the papillomaviridae E5 protein family.</text>
</comment>
<sequence length="44" mass="5210">MPNLWFLLFLGLVAAMQLLLLLFLLLFFLVYWDHFECSCTGLPF</sequence>
<proteinExistence type="evidence at protein level"/>
<keyword id="KW-0244">Early protein</keyword>
<keyword id="KW-1043">Host membrane</keyword>
<keyword id="KW-0472">Membrane</keyword>
<keyword id="KW-0553">Oncogene</keyword>
<keyword id="KW-1185">Reference proteome</keyword>
<organism>
    <name type="scientific">Bovine papillomavirus type 1</name>
    <dbReference type="NCBI Taxonomy" id="337052"/>
    <lineage>
        <taxon>Viruses</taxon>
        <taxon>Monodnaviria</taxon>
        <taxon>Shotokuvirae</taxon>
        <taxon>Cossaviricota</taxon>
        <taxon>Papovaviricetes</taxon>
        <taxon>Zurhausenvirales</taxon>
        <taxon>Papillomaviridae</taxon>
        <taxon>Firstpapillomavirinae</taxon>
        <taxon>Deltapapillomavirus</taxon>
    </lineage>
</organism>
<feature type="chain" id="PRO_0000133286" description="Protein E5">
    <location>
        <begin position="1"/>
        <end position="44"/>
    </location>
</feature>
<feature type="region of interest" description="Cellular DNA synthesis induction">
    <location>
        <begin position="32"/>
        <end position="44"/>
    </location>
</feature>